<keyword id="KW-0002">3D-structure</keyword>
<keyword id="KW-0997">Cell inner membrane</keyword>
<keyword id="KW-1003">Cell membrane</keyword>
<keyword id="KW-0472">Membrane</keyword>
<keyword id="KW-1185">Reference proteome</keyword>
<keyword id="KW-0812">Transmembrane</keyword>
<keyword id="KW-1133">Transmembrane helix</keyword>
<keyword id="KW-0813">Transport</keyword>
<keyword id="KW-0843">Virulence</keyword>
<proteinExistence type="evidence at protein level"/>
<comment type="function">
    <text evidence="4 5">Part of an export system, which is required for biosynthesis and secretion of siderophores (PubMed:23431276). Essential for normal replication during the active-growth phase of the murine tuberculosis model (PubMed:15908378).</text>
</comment>
<comment type="subunit">
    <text evidence="5">Interacts with MmpS4.</text>
</comment>
<comment type="subcellular location">
    <subcellularLocation>
        <location evidence="8">Cell inner membrane</location>
        <topology evidence="1">Multi-pass membrane protein</topology>
    </subcellularLocation>
</comment>
<comment type="induction">
    <text evidence="3 6">Transcriptionally regulated by MmpR5 (PubMed:24737322). Repressed by iron and IdeR (PubMed:12065475).</text>
</comment>
<comment type="disruption phenotype">
    <text evidence="4">Inactivation increases mouse survival.</text>
</comment>
<comment type="similarity">
    <text evidence="7">Belongs to the resistance-nodulation-cell division (RND) (TC 2.A.6) family. MmpL subfamily.</text>
</comment>
<feature type="chain" id="PRO_0000103566" description="Siderophore exporter MmpL4">
    <location>
        <begin position="1"/>
        <end position="967"/>
    </location>
</feature>
<feature type="transmembrane region" description="Helical" evidence="1">
    <location>
        <begin position="26"/>
        <end position="46"/>
    </location>
</feature>
<feature type="transmembrane region" description="Helical" evidence="1">
    <location>
        <begin position="210"/>
        <end position="230"/>
    </location>
</feature>
<feature type="transmembrane region" description="Helical" evidence="1">
    <location>
        <begin position="242"/>
        <end position="262"/>
    </location>
</feature>
<feature type="transmembrane region" description="Helical" evidence="1">
    <location>
        <begin position="303"/>
        <end position="323"/>
    </location>
</feature>
<feature type="transmembrane region" description="Helical" evidence="1">
    <location>
        <begin position="333"/>
        <end position="353"/>
    </location>
</feature>
<feature type="transmembrane region" description="Helical" evidence="1">
    <location>
        <begin position="384"/>
        <end position="404"/>
    </location>
</feature>
<feature type="transmembrane region" description="Helical" evidence="1">
    <location>
        <begin position="769"/>
        <end position="789"/>
    </location>
</feature>
<feature type="transmembrane region" description="Helical" evidence="1">
    <location>
        <begin position="793"/>
        <end position="813"/>
    </location>
</feature>
<feature type="transmembrane region" description="Helical" evidence="1">
    <location>
        <begin position="821"/>
        <end position="841"/>
    </location>
</feature>
<feature type="transmembrane region" description="Helical" evidence="1">
    <location>
        <begin position="875"/>
        <end position="895"/>
    </location>
</feature>
<feature type="transmembrane region" description="Helical" evidence="1">
    <location>
        <begin position="913"/>
        <end position="934"/>
    </location>
</feature>
<feature type="region of interest" description="Disordered" evidence="2">
    <location>
        <begin position="943"/>
        <end position="967"/>
    </location>
</feature>
<gene>
    <name type="primary">mmpL4</name>
    <name type="ordered locus">Rv0450c</name>
    <name type="ORF">MTV037.14c</name>
</gene>
<organism>
    <name type="scientific">Mycobacterium tuberculosis (strain ATCC 25618 / H37Rv)</name>
    <dbReference type="NCBI Taxonomy" id="83332"/>
    <lineage>
        <taxon>Bacteria</taxon>
        <taxon>Bacillati</taxon>
        <taxon>Actinomycetota</taxon>
        <taxon>Actinomycetes</taxon>
        <taxon>Mycobacteriales</taxon>
        <taxon>Mycobacteriaceae</taxon>
        <taxon>Mycobacterium</taxon>
        <taxon>Mycobacterium tuberculosis complex</taxon>
    </lineage>
</organism>
<protein>
    <recommendedName>
        <fullName evidence="7">Siderophore exporter MmpL4</fullName>
    </recommendedName>
</protein>
<dbReference type="EMBL" id="AL123456">
    <property type="protein sequence ID" value="CCP43181.1"/>
    <property type="molecule type" value="Genomic_DNA"/>
</dbReference>
<dbReference type="PIR" id="C70831">
    <property type="entry name" value="C70831"/>
</dbReference>
<dbReference type="RefSeq" id="NP_214964.1">
    <property type="nucleotide sequence ID" value="NC_000962.3"/>
</dbReference>
<dbReference type="RefSeq" id="WP_003898458.1">
    <property type="nucleotide sequence ID" value="NZ_NVQJ01000002.1"/>
</dbReference>
<dbReference type="PDB" id="9GI0">
    <property type="method" value="EM"/>
    <property type="resolution" value="3.00 A"/>
    <property type="chains" value="B=1-490, B=687-967"/>
</dbReference>
<dbReference type="PDB" id="9GI2">
    <property type="method" value="EM"/>
    <property type="resolution" value="3.40 A"/>
    <property type="chains" value="B=2-490, B=687-967"/>
</dbReference>
<dbReference type="PDB" id="9GI3">
    <property type="method" value="EM"/>
    <property type="resolution" value="3.50 A"/>
    <property type="chains" value="B=2-490, B=687-967"/>
</dbReference>
<dbReference type="PDBsum" id="9GI0"/>
<dbReference type="PDBsum" id="9GI2"/>
<dbReference type="PDBsum" id="9GI3"/>
<dbReference type="SMR" id="P9WJV3"/>
<dbReference type="STRING" id="83332.Rv0450c"/>
<dbReference type="PaxDb" id="83332-Rv0450c"/>
<dbReference type="DNASU" id="886323"/>
<dbReference type="GeneID" id="886323"/>
<dbReference type="KEGG" id="mtu:Rv0450c"/>
<dbReference type="KEGG" id="mtv:RVBD_0450c"/>
<dbReference type="TubercuList" id="Rv0450c"/>
<dbReference type="eggNOG" id="COG1033">
    <property type="taxonomic scope" value="Bacteria"/>
</dbReference>
<dbReference type="eggNOG" id="COG2409">
    <property type="taxonomic scope" value="Bacteria"/>
</dbReference>
<dbReference type="InParanoid" id="P9WJV3"/>
<dbReference type="OrthoDB" id="4758927at2"/>
<dbReference type="PhylomeDB" id="P9WJV3"/>
<dbReference type="Proteomes" id="UP000001584">
    <property type="component" value="Chromosome"/>
</dbReference>
<dbReference type="GO" id="GO:0005576">
    <property type="term" value="C:extracellular region"/>
    <property type="evidence" value="ECO:0007005"/>
    <property type="project" value="MTBBASE"/>
</dbReference>
<dbReference type="GO" id="GO:0009274">
    <property type="term" value="C:peptidoglycan-based cell wall"/>
    <property type="evidence" value="ECO:0007005"/>
    <property type="project" value="MTBBASE"/>
</dbReference>
<dbReference type="GO" id="GO:0005886">
    <property type="term" value="C:plasma membrane"/>
    <property type="evidence" value="ECO:0007005"/>
    <property type="project" value="MTBBASE"/>
</dbReference>
<dbReference type="FunFam" id="1.20.1640.10:FF:000018">
    <property type="entry name" value="Transmembrane transport protein MmpL10"/>
    <property type="match status" value="1"/>
</dbReference>
<dbReference type="FunFam" id="1.20.1640.10:FF:000020">
    <property type="entry name" value="Transmembrane transport protein MmpL10"/>
    <property type="match status" value="1"/>
</dbReference>
<dbReference type="Gene3D" id="1.20.1640.10">
    <property type="entry name" value="Multidrug efflux transporter AcrB transmembrane domain"/>
    <property type="match status" value="2"/>
</dbReference>
<dbReference type="InterPro" id="IPR004869">
    <property type="entry name" value="MMPL_dom"/>
</dbReference>
<dbReference type="InterPro" id="IPR004707">
    <property type="entry name" value="MmpL_fam"/>
</dbReference>
<dbReference type="InterPro" id="IPR050545">
    <property type="entry name" value="Mycobact_MmpL"/>
</dbReference>
<dbReference type="NCBIfam" id="TIGR00833">
    <property type="entry name" value="actII"/>
    <property type="match status" value="1"/>
</dbReference>
<dbReference type="PANTHER" id="PTHR33406">
    <property type="entry name" value="MEMBRANE PROTEIN MJ1562-RELATED"/>
    <property type="match status" value="1"/>
</dbReference>
<dbReference type="PANTHER" id="PTHR33406:SF6">
    <property type="entry name" value="MEMBRANE PROTEIN YDGH-RELATED"/>
    <property type="match status" value="1"/>
</dbReference>
<dbReference type="Pfam" id="PF03176">
    <property type="entry name" value="MMPL"/>
    <property type="match status" value="2"/>
</dbReference>
<dbReference type="SUPFAM" id="SSF82866">
    <property type="entry name" value="Multidrug efflux transporter AcrB transmembrane domain"/>
    <property type="match status" value="2"/>
</dbReference>
<evidence type="ECO:0000255" key="1"/>
<evidence type="ECO:0000256" key="2">
    <source>
        <dbReference type="SAM" id="MobiDB-lite"/>
    </source>
</evidence>
<evidence type="ECO:0000269" key="3">
    <source>
    </source>
</evidence>
<evidence type="ECO:0000269" key="4">
    <source>
    </source>
</evidence>
<evidence type="ECO:0000269" key="5">
    <source>
    </source>
</evidence>
<evidence type="ECO:0000269" key="6">
    <source>
    </source>
</evidence>
<evidence type="ECO:0000305" key="7"/>
<evidence type="ECO:0000305" key="8">
    <source>
    </source>
</evidence>
<name>MMPL4_MYCTU</name>
<accession>P9WJV3</accession>
<accession>L0T3R9</accession>
<accession>O53735</accession>
<sequence length="967" mass="105234">MSTKFANDSNTNARPEKPFIARMIHAFAVPIILGWLAVCVVVTVFVPSLEAVGQERSVSLSPKDAPSFEAMGRIGMVFKEGDSDSFAMVIIEGNQPLGDAAHKYYDGLVAQLRADKKHVQSVQDLWGDPLTAAGVQSNDGKAAYVQLSLAGNQGTPLANESVEAVRSIVESTPAPPGIKAYVTGPSALAADMHHSGDRSMARITMVTVAVIFIMLLLVYRSIITVVLLLITVGVELTAARGVVAVLGHSGAIGLTTFAVSLLTSLAIAAGTDYGIFIIGRYQEARQAGEDKEAAYYTMYRGTAHVILGSGLTIAGATFCLSFARMPYFQTLGIPCAVGMLVAVAVALTLGPAVLHVGSRFGLFDPKRLLKVRGWRRVGTVVVRWPLPVLVATCAIALVGLLALPGYKTSYNDRDYLPDFIPANQGYAAADRHFSQARMKPEILMIESDHDMRNPADFLVLDKLAKGIFRVPGISRVQAITRPEGTTMDHTSIPFQISMQNAGQLQTIKYQRDRANDMLKQADEMATTIAVLTRMHSLMAEMASTTHRMVGDTEEMKEITEELRDHVADFDDFWRPIRSYFYWEKHCYGIPICWSFRSIFDALDGIDKLSEQIGVLLGDLREMDRLMPQMVAQIPPQIEAMENMRTMILTMHSTMTGIFDQMLEMSDNATAMGKAFDAAKNDDSFYLPPEVFKNKDFQRAMKSFLSSDGHAARFIILHRGDPQSPEGIKSIDAIRTAAEESLKGTPLEDAKIYLAGTAAVFHDISEGAQWDLLIAAISSLCLIFIIMLIITRAFIAAAVIVGTVALSLGASFGLSVLLWQHILAIHLHWLVLAMSVIVLLAVGSDYNLLLVSRFKQEIGAGLKTGIIRSMGGTGKVVTNAGLVFAVTMASMAVSDLRVIGQVGTTIGLGLLFDTLIVRSFMTPSIAALLGRWFWWPLRVRSRPARTPTVPSETQPAGRPLAMSSDRLG</sequence>
<reference key="1">
    <citation type="journal article" date="1998" name="Nature">
        <title>Deciphering the biology of Mycobacterium tuberculosis from the complete genome sequence.</title>
        <authorList>
            <person name="Cole S.T."/>
            <person name="Brosch R."/>
            <person name="Parkhill J."/>
            <person name="Garnier T."/>
            <person name="Churcher C.M."/>
            <person name="Harris D.E."/>
            <person name="Gordon S.V."/>
            <person name="Eiglmeier K."/>
            <person name="Gas S."/>
            <person name="Barry C.E. III"/>
            <person name="Tekaia F."/>
            <person name="Badcock K."/>
            <person name="Basham D."/>
            <person name="Brown D."/>
            <person name="Chillingworth T."/>
            <person name="Connor R."/>
            <person name="Davies R.M."/>
            <person name="Devlin K."/>
            <person name="Feltwell T."/>
            <person name="Gentles S."/>
            <person name="Hamlin N."/>
            <person name="Holroyd S."/>
            <person name="Hornsby T."/>
            <person name="Jagels K."/>
            <person name="Krogh A."/>
            <person name="McLean J."/>
            <person name="Moule S."/>
            <person name="Murphy L.D."/>
            <person name="Oliver S."/>
            <person name="Osborne J."/>
            <person name="Quail M.A."/>
            <person name="Rajandream M.A."/>
            <person name="Rogers J."/>
            <person name="Rutter S."/>
            <person name="Seeger K."/>
            <person name="Skelton S."/>
            <person name="Squares S."/>
            <person name="Squares R."/>
            <person name="Sulston J.E."/>
            <person name="Taylor K."/>
            <person name="Whitehead S."/>
            <person name="Barrell B.G."/>
        </authorList>
    </citation>
    <scope>NUCLEOTIDE SEQUENCE [LARGE SCALE GENOMIC DNA]</scope>
    <source>
        <strain>ATCC 25618 / H37Rv</strain>
    </source>
</reference>
<reference key="2">
    <citation type="journal article" date="2002" name="Infect. Immun.">
        <title>IdeR, an essential gene in Mycobacterium tuberculosis: role of IdeR in iron-dependent gene expression, iron metabolism, and oxidative stress response.</title>
        <authorList>
            <person name="Rodriguez G.M."/>
            <person name="Voskuil M.I."/>
            <person name="Gold B."/>
            <person name="Schoolnik G.K."/>
            <person name="Smith I."/>
        </authorList>
    </citation>
    <scope>INDUCTION</scope>
    <source>
        <strain>H37Rv</strain>
    </source>
</reference>
<reference key="3">
    <citation type="journal article" date="2005" name="Infect. Immun.">
        <title>Contribution of the Mycobacterium tuberculosis MmpL protein family to virulence and drug resistance.</title>
        <authorList>
            <person name="Domenech P."/>
            <person name="Reed M.B."/>
            <person name="Barry C.E. III"/>
        </authorList>
    </citation>
    <scope>FUNCTION IN VIRULENCE</scope>
    <scope>DISRUPTION PHENOTYPE</scope>
    <source>
        <strain>ATCC 25618 / H37Rv</strain>
    </source>
</reference>
<reference key="4">
    <citation type="journal article" date="2011" name="Mol. Cell. Proteomics">
        <title>Proteogenomic analysis of Mycobacterium tuberculosis by high resolution mass spectrometry.</title>
        <authorList>
            <person name="Kelkar D.S."/>
            <person name="Kumar D."/>
            <person name="Kumar P."/>
            <person name="Balakrishnan L."/>
            <person name="Muthusamy B."/>
            <person name="Yadav A.K."/>
            <person name="Shrivastava P."/>
            <person name="Marimuthu A."/>
            <person name="Anand S."/>
            <person name="Sundaram H."/>
            <person name="Kingsbury R."/>
            <person name="Harsha H.C."/>
            <person name="Nair B."/>
            <person name="Prasad T.S."/>
            <person name="Chauhan D.S."/>
            <person name="Katoch K."/>
            <person name="Katoch V.M."/>
            <person name="Kumar P."/>
            <person name="Chaerkady R."/>
            <person name="Ramachandran S."/>
            <person name="Dash D."/>
            <person name="Pandey A."/>
        </authorList>
    </citation>
    <scope>IDENTIFICATION BY MASS SPECTROMETRY [LARGE SCALE ANALYSIS]</scope>
    <source>
        <strain>ATCC 25618 / H37Rv</strain>
    </source>
</reference>
<reference key="5">
    <citation type="journal article" date="2013" name="PLoS Pathog.">
        <title>Discovery of a siderophore export system essential for virulence of Mycobacterium tuberculosis.</title>
        <authorList>
            <person name="Wells R.M."/>
            <person name="Jones C.M."/>
            <person name="Xi Z."/>
            <person name="Speer A."/>
            <person name="Danilchanka O."/>
            <person name="Doornbos K.S."/>
            <person name="Sun P."/>
            <person name="Wu F."/>
            <person name="Tian C."/>
            <person name="Niederweis M."/>
        </authorList>
    </citation>
    <scope>FUNCTION</scope>
    <scope>INTERACTION WITH MMPS4</scope>
    <source>
        <strain>H37Rv</strain>
    </source>
</reference>
<reference key="6">
    <citation type="journal article" date="2014" name="J. Biol. Chem.">
        <title>Crystal structure of the transcriptional regulator Rv0678 of Mycobacterium tuberculosis.</title>
        <authorList>
            <person name="Radhakrishnan A."/>
            <person name="Kumar N."/>
            <person name="Wright C.C."/>
            <person name="Chou T.H."/>
            <person name="Tringides M.L."/>
            <person name="Bolla J.R."/>
            <person name="Lei H.T."/>
            <person name="Rajashankar K.R."/>
            <person name="Su C.C."/>
            <person name="Purdy G.E."/>
            <person name="Yu E.W."/>
        </authorList>
    </citation>
    <scope>INDUCTION</scope>
    <source>
        <strain>H37Rv</strain>
    </source>
</reference>